<keyword id="KW-0030">Aminoacyl-tRNA synthetase</keyword>
<keyword id="KW-0067">ATP-binding</keyword>
<keyword id="KW-0963">Cytoplasm</keyword>
<keyword id="KW-0436">Ligase</keyword>
<keyword id="KW-0479">Metal-binding</keyword>
<keyword id="KW-0547">Nucleotide-binding</keyword>
<keyword id="KW-0648">Protein biosynthesis</keyword>
<keyword id="KW-1185">Reference proteome</keyword>
<keyword id="KW-0694">RNA-binding</keyword>
<keyword id="KW-0820">tRNA-binding</keyword>
<keyword id="KW-0862">Zinc</keyword>
<dbReference type="EC" id="6.1.1.3" evidence="1"/>
<dbReference type="EMBL" id="AP006878">
    <property type="protein sequence ID" value="BAD85359.1"/>
    <property type="molecule type" value="Genomic_DNA"/>
</dbReference>
<dbReference type="RefSeq" id="WP_011250121.1">
    <property type="nucleotide sequence ID" value="NC_006624.1"/>
</dbReference>
<dbReference type="SMR" id="Q5JGC8"/>
<dbReference type="FunCoup" id="Q5JGC8">
    <property type="interactions" value="139"/>
</dbReference>
<dbReference type="STRING" id="69014.TK1170"/>
<dbReference type="EnsemblBacteria" id="BAD85359">
    <property type="protein sequence ID" value="BAD85359"/>
    <property type="gene ID" value="TK1170"/>
</dbReference>
<dbReference type="GeneID" id="78447685"/>
<dbReference type="KEGG" id="tko:TK1170"/>
<dbReference type="PATRIC" id="fig|69014.16.peg.1145"/>
<dbReference type="eggNOG" id="arCOG00401">
    <property type="taxonomic scope" value="Archaea"/>
</dbReference>
<dbReference type="HOGENOM" id="CLU_029833_0_0_2"/>
<dbReference type="InParanoid" id="Q5JGC8"/>
<dbReference type="OrthoDB" id="372136at2157"/>
<dbReference type="PhylomeDB" id="Q5JGC8"/>
<dbReference type="Proteomes" id="UP000000536">
    <property type="component" value="Chromosome"/>
</dbReference>
<dbReference type="GO" id="GO:0005737">
    <property type="term" value="C:cytoplasm"/>
    <property type="evidence" value="ECO:0007669"/>
    <property type="project" value="UniProtKB-SubCell"/>
</dbReference>
<dbReference type="GO" id="GO:0005524">
    <property type="term" value="F:ATP binding"/>
    <property type="evidence" value="ECO:0007669"/>
    <property type="project" value="UniProtKB-UniRule"/>
</dbReference>
<dbReference type="GO" id="GO:0004829">
    <property type="term" value="F:threonine-tRNA ligase activity"/>
    <property type="evidence" value="ECO:0000318"/>
    <property type="project" value="GO_Central"/>
</dbReference>
<dbReference type="GO" id="GO:0000049">
    <property type="term" value="F:tRNA binding"/>
    <property type="evidence" value="ECO:0007669"/>
    <property type="project" value="UniProtKB-KW"/>
</dbReference>
<dbReference type="GO" id="GO:0008270">
    <property type="term" value="F:zinc ion binding"/>
    <property type="evidence" value="ECO:0007669"/>
    <property type="project" value="InterPro"/>
</dbReference>
<dbReference type="GO" id="GO:0006435">
    <property type="term" value="P:threonyl-tRNA aminoacylation"/>
    <property type="evidence" value="ECO:0000318"/>
    <property type="project" value="GO_Central"/>
</dbReference>
<dbReference type="CDD" id="cd00860">
    <property type="entry name" value="ThrRS_anticodon"/>
    <property type="match status" value="1"/>
</dbReference>
<dbReference type="FunFam" id="3.30.930.10:FF:000076">
    <property type="entry name" value="Threonine--tRNA ligase"/>
    <property type="match status" value="1"/>
</dbReference>
<dbReference type="FunFam" id="3.40.50.800:FF:000001">
    <property type="entry name" value="Threonine--tRNA ligase"/>
    <property type="match status" value="1"/>
</dbReference>
<dbReference type="FunFam" id="3.50.80.10:FF:000004">
    <property type="entry name" value="Threonine--tRNA ligase"/>
    <property type="match status" value="1"/>
</dbReference>
<dbReference type="Gene3D" id="3.40.50.800">
    <property type="entry name" value="Anticodon-binding domain"/>
    <property type="match status" value="1"/>
</dbReference>
<dbReference type="Gene3D" id="3.30.930.10">
    <property type="entry name" value="Bira Bifunctional Protein, Domain 2"/>
    <property type="match status" value="1"/>
</dbReference>
<dbReference type="Gene3D" id="3.50.80.10">
    <property type="entry name" value="D-tyrosyl-tRNA(Tyr) deacylase"/>
    <property type="match status" value="1"/>
</dbReference>
<dbReference type="HAMAP" id="MF_00184">
    <property type="entry name" value="Thr_tRNA_synth"/>
    <property type="match status" value="1"/>
</dbReference>
<dbReference type="InterPro" id="IPR002314">
    <property type="entry name" value="aa-tRNA-synt_IIb"/>
</dbReference>
<dbReference type="InterPro" id="IPR006195">
    <property type="entry name" value="aa-tRNA-synth_II"/>
</dbReference>
<dbReference type="InterPro" id="IPR045864">
    <property type="entry name" value="aa-tRNA-synth_II/BPL/LPL"/>
</dbReference>
<dbReference type="InterPro" id="IPR004154">
    <property type="entry name" value="Anticodon-bd"/>
</dbReference>
<dbReference type="InterPro" id="IPR036621">
    <property type="entry name" value="Anticodon-bd_dom_sf"/>
</dbReference>
<dbReference type="InterPro" id="IPR023509">
    <property type="entry name" value="DTD-like_sf"/>
</dbReference>
<dbReference type="InterPro" id="IPR002320">
    <property type="entry name" value="Thr-tRNA-ligase_IIa"/>
</dbReference>
<dbReference type="InterPro" id="IPR015011">
    <property type="entry name" value="Threonyl-tRNA_syn_edit_dom_arc"/>
</dbReference>
<dbReference type="InterPro" id="IPR047246">
    <property type="entry name" value="ThrRS_anticodon"/>
</dbReference>
<dbReference type="NCBIfam" id="NF003068">
    <property type="entry name" value="PRK03991.1"/>
    <property type="match status" value="1"/>
</dbReference>
<dbReference type="NCBIfam" id="TIGR00418">
    <property type="entry name" value="thrS"/>
    <property type="match status" value="1"/>
</dbReference>
<dbReference type="PANTHER" id="PTHR11451:SF44">
    <property type="entry name" value="THREONINE--TRNA LIGASE, CHLOROPLASTIC_MITOCHONDRIAL 2"/>
    <property type="match status" value="1"/>
</dbReference>
<dbReference type="PANTHER" id="PTHR11451">
    <property type="entry name" value="THREONINE-TRNA LIGASE"/>
    <property type="match status" value="1"/>
</dbReference>
<dbReference type="Pfam" id="PF03129">
    <property type="entry name" value="HGTP_anticodon"/>
    <property type="match status" value="1"/>
</dbReference>
<dbReference type="Pfam" id="PF00587">
    <property type="entry name" value="tRNA-synt_2b"/>
    <property type="match status" value="1"/>
</dbReference>
<dbReference type="Pfam" id="PF08915">
    <property type="entry name" value="tRNA-Thr_ED"/>
    <property type="match status" value="1"/>
</dbReference>
<dbReference type="PRINTS" id="PR01047">
    <property type="entry name" value="TRNASYNTHTHR"/>
</dbReference>
<dbReference type="SUPFAM" id="SSF52954">
    <property type="entry name" value="Class II aaRS ABD-related"/>
    <property type="match status" value="1"/>
</dbReference>
<dbReference type="SUPFAM" id="SSF55681">
    <property type="entry name" value="Class II aaRS and biotin synthetases"/>
    <property type="match status" value="1"/>
</dbReference>
<dbReference type="PROSITE" id="PS50862">
    <property type="entry name" value="AA_TRNA_LIGASE_II"/>
    <property type="match status" value="1"/>
</dbReference>
<sequence>MRMLLIHSDYLEYEVKDKALKNPEPISDEQKTGRLDEVLAVFISVEKVDETNPDEVVEKAVKEIEDVASQIKAERIFVYPFAHLSSELAKPDVALEVLRKIEEKLREKGYEVKRAPFGYYKAFKLSCKGHPLAELSRTIVPEKAVSKEERNIALEKEEKELKSYWYILTPEGELIDVDKFDFTGHENLKKFVNYEIAKNRVADREPPHVRLMLEQELVDYEPGSDAGNLRYYPKGRLIKSLLEQYVTEKVIEYGAMEVETPIMYDFEHPALEKYLNRFPARQYVVKSGDKKFFLRFAACFGQFLIKKDATISYRNLPLRMYELTRYSFRREKSGELSGLRRLRAFTMPDMHTVARDLKQAMDEFKKQYKLSMEVLKGVGLTPEDYEVAIRFTRDFWEQNRDFIVELAKIIGKPVLIEMWDQRFFYFILKFEFNFVDNLDKAAALSTVQIDVENAERFGIKYYDEEGKERTPLILHCSPSGAIERVMYAILEKQAKLQEKGIKPMYPLWLSPIQVRVIPVSDEVMDYALYVAGKLEGAKIRVDVDDTGDRLNKKIRKAEKEWIPYIIVVGRNEKEQNTVTVRRRSDGRQVEMQLEDLIREIKGQTEGFPYKPRPLPLLLSRRPKFRG</sequence>
<comment type="function">
    <text evidence="1">Catalyzes the attachment of threonine to tRNA(Thr) in a two-step reaction: L-threonine is first activated by ATP to form Thr-AMP and then transferred to the acceptor end of tRNA(Thr). Also edits incorrectly charged L-seryl-tRNA(Thr).</text>
</comment>
<comment type="catalytic activity">
    <reaction evidence="1">
        <text>tRNA(Thr) + L-threonine + ATP = L-threonyl-tRNA(Thr) + AMP + diphosphate + H(+)</text>
        <dbReference type="Rhea" id="RHEA:24624"/>
        <dbReference type="Rhea" id="RHEA-COMP:9670"/>
        <dbReference type="Rhea" id="RHEA-COMP:9704"/>
        <dbReference type="ChEBI" id="CHEBI:15378"/>
        <dbReference type="ChEBI" id="CHEBI:30616"/>
        <dbReference type="ChEBI" id="CHEBI:33019"/>
        <dbReference type="ChEBI" id="CHEBI:57926"/>
        <dbReference type="ChEBI" id="CHEBI:78442"/>
        <dbReference type="ChEBI" id="CHEBI:78534"/>
        <dbReference type="ChEBI" id="CHEBI:456215"/>
        <dbReference type="EC" id="6.1.1.3"/>
    </reaction>
</comment>
<comment type="cofactor">
    <cofactor evidence="1">
        <name>Zn(2+)</name>
        <dbReference type="ChEBI" id="CHEBI:29105"/>
    </cofactor>
    <text evidence="1">Binds 1 zinc ion per subunit.</text>
</comment>
<comment type="subunit">
    <text evidence="1">Homodimer.</text>
</comment>
<comment type="subcellular location">
    <subcellularLocation>
        <location evidence="1">Cytoplasm</location>
    </subcellularLocation>
</comment>
<comment type="domain">
    <text evidence="1">The N-terminal domain is an archaea-specific tRNA-editing domain that hydrolyzes incorrectly charged L-seryl-tRNA(Thr). Catalysis of tRNA editing is performed by the charged tRNA itself.</text>
</comment>
<comment type="similarity">
    <text evidence="1">Belongs to the class-II aminoacyl-tRNA synthetase family.</text>
</comment>
<feature type="chain" id="PRO_0000101111" description="Threonine--tRNA ligase">
    <location>
        <begin position="1"/>
        <end position="626"/>
    </location>
</feature>
<feature type="region of interest" description="Editing domain" evidence="1">
    <location>
        <begin position="1"/>
        <end position="145"/>
    </location>
</feature>
<feature type="region of interest" description="Catalytic" evidence="1">
    <location>
        <begin position="207"/>
        <end position="506"/>
    </location>
</feature>
<feature type="binding site" evidence="1">
    <location>
        <position position="299"/>
    </location>
    <ligand>
        <name>Zn(2+)</name>
        <dbReference type="ChEBI" id="CHEBI:29105"/>
    </ligand>
</feature>
<feature type="binding site" evidence="1">
    <location>
        <position position="351"/>
    </location>
    <ligand>
        <name>Zn(2+)</name>
        <dbReference type="ChEBI" id="CHEBI:29105"/>
    </ligand>
</feature>
<feature type="binding site" evidence="1">
    <location>
        <position position="475"/>
    </location>
    <ligand>
        <name>Zn(2+)</name>
        <dbReference type="ChEBI" id="CHEBI:29105"/>
    </ligand>
</feature>
<evidence type="ECO:0000255" key="1">
    <source>
        <dbReference type="HAMAP-Rule" id="MF_00184"/>
    </source>
</evidence>
<gene>
    <name evidence="1" type="primary">thrS</name>
    <name type="ordered locus">TK1170</name>
</gene>
<name>SYT_THEKO</name>
<proteinExistence type="inferred from homology"/>
<reference key="1">
    <citation type="journal article" date="2005" name="Genome Res.">
        <title>Complete genome sequence of the hyperthermophilic archaeon Thermococcus kodakaraensis KOD1 and comparison with Pyrococcus genomes.</title>
        <authorList>
            <person name="Fukui T."/>
            <person name="Atomi H."/>
            <person name="Kanai T."/>
            <person name="Matsumi R."/>
            <person name="Fujiwara S."/>
            <person name="Imanaka T."/>
        </authorList>
    </citation>
    <scope>NUCLEOTIDE SEQUENCE [LARGE SCALE GENOMIC DNA]</scope>
    <source>
        <strain>ATCC BAA-918 / JCM 12380 / KOD1</strain>
    </source>
</reference>
<protein>
    <recommendedName>
        <fullName evidence="1">Threonine--tRNA ligase</fullName>
        <ecNumber evidence="1">6.1.1.3</ecNumber>
    </recommendedName>
    <alternativeName>
        <fullName evidence="1">Threonyl-tRNA synthetase</fullName>
        <shortName evidence="1">ThrRS</shortName>
    </alternativeName>
</protein>
<accession>Q5JGC8</accession>
<organism>
    <name type="scientific">Thermococcus kodakarensis (strain ATCC BAA-918 / JCM 12380 / KOD1)</name>
    <name type="common">Pyrococcus kodakaraensis (strain KOD1)</name>
    <dbReference type="NCBI Taxonomy" id="69014"/>
    <lineage>
        <taxon>Archaea</taxon>
        <taxon>Methanobacteriati</taxon>
        <taxon>Methanobacteriota</taxon>
        <taxon>Thermococci</taxon>
        <taxon>Thermococcales</taxon>
        <taxon>Thermococcaceae</taxon>
        <taxon>Thermococcus</taxon>
    </lineage>
</organism>